<reference key="1">
    <citation type="journal article" date="1998" name="Nature">
        <title>The complete genome of the hyperthermophilic bacterium Aquifex aeolicus.</title>
        <authorList>
            <person name="Deckert G."/>
            <person name="Warren P.V."/>
            <person name="Gaasterland T."/>
            <person name="Young W.G."/>
            <person name="Lenox A.L."/>
            <person name="Graham D.E."/>
            <person name="Overbeek R."/>
            <person name="Snead M.A."/>
            <person name="Keller M."/>
            <person name="Aujay M."/>
            <person name="Huber R."/>
            <person name="Feldman R.A."/>
            <person name="Short J.M."/>
            <person name="Olsen G.J."/>
            <person name="Swanson R.V."/>
        </authorList>
    </citation>
    <scope>NUCLEOTIDE SEQUENCE [LARGE SCALE GENOMIC DNA]</scope>
    <source>
        <strain>VF5</strain>
    </source>
</reference>
<sequence length="160" mass="18608">MPRKGPVPPREIPPDPKYGDVLVQKLINKVMKDGKKSVAEWIVYTALEEAAKEVNMHPVELLHKVIEKLKPEWEVRPRRVGGATYQVPIEVPERRQISLAIKWLVQAARERPRGRGQYTMIERLKAELLDALNERGGAYKKKEETHRMAHANMVFSHFRW</sequence>
<feature type="chain" id="PRO_0000124208" description="Small ribosomal subunit protein uS7B">
    <location>
        <begin position="1"/>
        <end position="160"/>
    </location>
</feature>
<name>RS7B_AQUAE</name>
<accession>O66944</accession>
<gene>
    <name evidence="1" type="primary">rpsG2</name>
    <name type="ordered locus">aq_734</name>
</gene>
<comment type="function">
    <text evidence="1">One of the primary rRNA binding proteins, it binds directly to 16S rRNA where it nucleates assembly of the head domain of the 30S subunit. Is located at the subunit interface close to the decoding center, probably blocks exit of the E-site tRNA.</text>
</comment>
<comment type="subunit">
    <text evidence="1">Part of the 30S ribosomal subunit. Contacts proteins S9 and S11.</text>
</comment>
<comment type="similarity">
    <text evidence="1">Belongs to the universal ribosomal protein uS7 family.</text>
</comment>
<dbReference type="EMBL" id="AE000657">
    <property type="protein sequence ID" value="AAC06909.1"/>
    <property type="molecule type" value="Genomic_DNA"/>
</dbReference>
<dbReference type="PIR" id="D70364">
    <property type="entry name" value="D70364"/>
</dbReference>
<dbReference type="RefSeq" id="NP_213504.1">
    <property type="nucleotide sequence ID" value="NC_000918.1"/>
</dbReference>
<dbReference type="RefSeq" id="WP_010880442.1">
    <property type="nucleotide sequence ID" value="NC_000918.1"/>
</dbReference>
<dbReference type="SMR" id="O66944"/>
<dbReference type="FunCoup" id="O66944">
    <property type="interactions" value="525"/>
</dbReference>
<dbReference type="STRING" id="224324.aq_734"/>
<dbReference type="EnsemblBacteria" id="AAC06909">
    <property type="protein sequence ID" value="AAC06909"/>
    <property type="gene ID" value="aq_734"/>
</dbReference>
<dbReference type="KEGG" id="aae:aq_734"/>
<dbReference type="PATRIC" id="fig|224324.8.peg.587"/>
<dbReference type="eggNOG" id="COG0049">
    <property type="taxonomic scope" value="Bacteria"/>
</dbReference>
<dbReference type="HOGENOM" id="CLU_072226_1_1_0"/>
<dbReference type="InParanoid" id="O66944"/>
<dbReference type="OrthoDB" id="9807653at2"/>
<dbReference type="Proteomes" id="UP000000798">
    <property type="component" value="Chromosome"/>
</dbReference>
<dbReference type="GO" id="GO:0022627">
    <property type="term" value="C:cytosolic small ribosomal subunit"/>
    <property type="evidence" value="ECO:0000318"/>
    <property type="project" value="GO_Central"/>
</dbReference>
<dbReference type="GO" id="GO:0005840">
    <property type="term" value="C:ribosome"/>
    <property type="evidence" value="ECO:0000318"/>
    <property type="project" value="GO_Central"/>
</dbReference>
<dbReference type="GO" id="GO:0003729">
    <property type="term" value="F:mRNA binding"/>
    <property type="evidence" value="ECO:0000318"/>
    <property type="project" value="GO_Central"/>
</dbReference>
<dbReference type="GO" id="GO:0019843">
    <property type="term" value="F:rRNA binding"/>
    <property type="evidence" value="ECO:0000318"/>
    <property type="project" value="GO_Central"/>
</dbReference>
<dbReference type="GO" id="GO:0003735">
    <property type="term" value="F:structural constituent of ribosome"/>
    <property type="evidence" value="ECO:0000318"/>
    <property type="project" value="GO_Central"/>
</dbReference>
<dbReference type="GO" id="GO:0000049">
    <property type="term" value="F:tRNA binding"/>
    <property type="evidence" value="ECO:0007669"/>
    <property type="project" value="UniProtKB-UniRule"/>
</dbReference>
<dbReference type="GO" id="GO:0000028">
    <property type="term" value="P:ribosomal small subunit assembly"/>
    <property type="evidence" value="ECO:0000318"/>
    <property type="project" value="GO_Central"/>
</dbReference>
<dbReference type="GO" id="GO:0006412">
    <property type="term" value="P:translation"/>
    <property type="evidence" value="ECO:0000318"/>
    <property type="project" value="GO_Central"/>
</dbReference>
<dbReference type="CDD" id="cd14869">
    <property type="entry name" value="uS7_Bacteria"/>
    <property type="match status" value="1"/>
</dbReference>
<dbReference type="FunFam" id="1.10.455.10:FF:000001">
    <property type="entry name" value="30S ribosomal protein S7"/>
    <property type="match status" value="1"/>
</dbReference>
<dbReference type="Gene3D" id="1.10.455.10">
    <property type="entry name" value="Ribosomal protein S7 domain"/>
    <property type="match status" value="1"/>
</dbReference>
<dbReference type="HAMAP" id="MF_00480_B">
    <property type="entry name" value="Ribosomal_uS7_B"/>
    <property type="match status" value="1"/>
</dbReference>
<dbReference type="InterPro" id="IPR000235">
    <property type="entry name" value="Ribosomal_uS7"/>
</dbReference>
<dbReference type="InterPro" id="IPR005717">
    <property type="entry name" value="Ribosomal_uS7_bac/org-type"/>
</dbReference>
<dbReference type="InterPro" id="IPR020606">
    <property type="entry name" value="Ribosomal_uS7_CS"/>
</dbReference>
<dbReference type="InterPro" id="IPR023798">
    <property type="entry name" value="Ribosomal_uS7_dom"/>
</dbReference>
<dbReference type="InterPro" id="IPR036823">
    <property type="entry name" value="Ribosomal_uS7_dom_sf"/>
</dbReference>
<dbReference type="NCBIfam" id="TIGR01029">
    <property type="entry name" value="rpsG_bact"/>
    <property type="match status" value="1"/>
</dbReference>
<dbReference type="PANTHER" id="PTHR11205">
    <property type="entry name" value="RIBOSOMAL PROTEIN S7"/>
    <property type="match status" value="1"/>
</dbReference>
<dbReference type="Pfam" id="PF00177">
    <property type="entry name" value="Ribosomal_S7"/>
    <property type="match status" value="1"/>
</dbReference>
<dbReference type="PIRSF" id="PIRSF002122">
    <property type="entry name" value="RPS7p_RPS7a_RPS5e_RPS7o"/>
    <property type="match status" value="1"/>
</dbReference>
<dbReference type="SUPFAM" id="SSF47973">
    <property type="entry name" value="Ribosomal protein S7"/>
    <property type="match status" value="1"/>
</dbReference>
<dbReference type="PROSITE" id="PS00052">
    <property type="entry name" value="RIBOSOMAL_S7"/>
    <property type="match status" value="1"/>
</dbReference>
<protein>
    <recommendedName>
        <fullName evidence="1">Small ribosomal subunit protein uS7B</fullName>
    </recommendedName>
    <alternativeName>
        <fullName evidence="2">30S ribosomal protein S7 2</fullName>
    </alternativeName>
</protein>
<keyword id="KW-1185">Reference proteome</keyword>
<keyword id="KW-0687">Ribonucleoprotein</keyword>
<keyword id="KW-0689">Ribosomal protein</keyword>
<keyword id="KW-0694">RNA-binding</keyword>
<keyword id="KW-0699">rRNA-binding</keyword>
<keyword id="KW-0820">tRNA-binding</keyword>
<organism>
    <name type="scientific">Aquifex aeolicus (strain VF5)</name>
    <dbReference type="NCBI Taxonomy" id="224324"/>
    <lineage>
        <taxon>Bacteria</taxon>
        <taxon>Pseudomonadati</taxon>
        <taxon>Aquificota</taxon>
        <taxon>Aquificia</taxon>
        <taxon>Aquificales</taxon>
        <taxon>Aquificaceae</taxon>
        <taxon>Aquifex</taxon>
    </lineage>
</organism>
<evidence type="ECO:0000255" key="1">
    <source>
        <dbReference type="HAMAP-Rule" id="MF_00480"/>
    </source>
</evidence>
<evidence type="ECO:0000305" key="2"/>
<proteinExistence type="inferred from homology"/>